<dbReference type="EMBL" id="CR940347">
    <property type="protein sequence ID" value="CAI72925.1"/>
    <property type="molecule type" value="Genomic_DNA"/>
</dbReference>
<dbReference type="RefSeq" id="XP_953603.1">
    <property type="nucleotide sequence ID" value="XM_948510.1"/>
</dbReference>
<dbReference type="SMR" id="Q4UJ14"/>
<dbReference type="STRING" id="5874.Q4UJ14"/>
<dbReference type="GeneID" id="3864509"/>
<dbReference type="KEGG" id="tan:TA09515"/>
<dbReference type="VEuPathDB" id="PiroplasmaDB:TA09515"/>
<dbReference type="eggNOG" id="KOG3454">
    <property type="taxonomic scope" value="Eukaryota"/>
</dbReference>
<dbReference type="InParanoid" id="Q4UJ14"/>
<dbReference type="OMA" id="QMRPPLM"/>
<dbReference type="OrthoDB" id="76567at2759"/>
<dbReference type="Proteomes" id="UP000001950">
    <property type="component" value="Chromosome 1 part 1"/>
</dbReference>
<dbReference type="GO" id="GO:0000243">
    <property type="term" value="C:commitment complex"/>
    <property type="evidence" value="ECO:0007669"/>
    <property type="project" value="UniProtKB-UniRule"/>
</dbReference>
<dbReference type="GO" id="GO:0005685">
    <property type="term" value="C:U1 snRNP"/>
    <property type="evidence" value="ECO:0007669"/>
    <property type="project" value="UniProtKB-UniRule"/>
</dbReference>
<dbReference type="GO" id="GO:0071004">
    <property type="term" value="C:U2-type prespliceosome"/>
    <property type="evidence" value="ECO:0007669"/>
    <property type="project" value="UniProtKB-UniRule"/>
</dbReference>
<dbReference type="GO" id="GO:0003729">
    <property type="term" value="F:mRNA binding"/>
    <property type="evidence" value="ECO:0007669"/>
    <property type="project" value="UniProtKB-UniRule"/>
</dbReference>
<dbReference type="GO" id="GO:0030627">
    <property type="term" value="F:pre-mRNA 5'-splice site binding"/>
    <property type="evidence" value="ECO:0007669"/>
    <property type="project" value="InterPro"/>
</dbReference>
<dbReference type="GO" id="GO:0030619">
    <property type="term" value="F:U1 snRNA binding"/>
    <property type="evidence" value="ECO:0007669"/>
    <property type="project" value="UniProtKB-UniRule"/>
</dbReference>
<dbReference type="GO" id="GO:0008270">
    <property type="term" value="F:zinc ion binding"/>
    <property type="evidence" value="ECO:0007669"/>
    <property type="project" value="UniProtKB-UniRule"/>
</dbReference>
<dbReference type="GO" id="GO:0000395">
    <property type="term" value="P:mRNA 5'-splice site recognition"/>
    <property type="evidence" value="ECO:0007669"/>
    <property type="project" value="UniProtKB-UniRule"/>
</dbReference>
<dbReference type="GO" id="GO:0000387">
    <property type="term" value="P:spliceosomal snRNP assembly"/>
    <property type="evidence" value="ECO:0007669"/>
    <property type="project" value="UniProtKB-UniRule"/>
</dbReference>
<dbReference type="FunFam" id="3.30.160.60:FF:000890">
    <property type="entry name" value="U1 small nuclear ribonucleoprotein C"/>
    <property type="match status" value="1"/>
</dbReference>
<dbReference type="Gene3D" id="3.30.160.60">
    <property type="entry name" value="Classic Zinc Finger"/>
    <property type="match status" value="1"/>
</dbReference>
<dbReference type="HAMAP" id="MF_03153">
    <property type="entry name" value="U1_C"/>
    <property type="match status" value="1"/>
</dbReference>
<dbReference type="InterPro" id="IPR000690">
    <property type="entry name" value="Matrin/U1-C_Znf_C2H2"/>
</dbReference>
<dbReference type="InterPro" id="IPR003604">
    <property type="entry name" value="Matrin/U1-like-C_Znf_C2H2"/>
</dbReference>
<dbReference type="InterPro" id="IPR013085">
    <property type="entry name" value="U1-CZ_Znf_C2H2"/>
</dbReference>
<dbReference type="InterPro" id="IPR017340">
    <property type="entry name" value="U1_snRNP-C"/>
</dbReference>
<dbReference type="InterPro" id="IPR036236">
    <property type="entry name" value="Znf_C2H2_sf"/>
</dbReference>
<dbReference type="PANTHER" id="PTHR31148">
    <property type="entry name" value="U1 SMALL NUCLEAR RIBONUCLEOPROTEIN C"/>
    <property type="match status" value="1"/>
</dbReference>
<dbReference type="PANTHER" id="PTHR31148:SF1">
    <property type="entry name" value="U1 SMALL NUCLEAR RIBONUCLEOPROTEIN C"/>
    <property type="match status" value="1"/>
</dbReference>
<dbReference type="Pfam" id="PF06220">
    <property type="entry name" value="zf-U1"/>
    <property type="match status" value="1"/>
</dbReference>
<dbReference type="PIRSF" id="PIRSF037969">
    <property type="entry name" value="U1_snRNP-C"/>
    <property type="match status" value="1"/>
</dbReference>
<dbReference type="SMART" id="SM00451">
    <property type="entry name" value="ZnF_U1"/>
    <property type="match status" value="1"/>
</dbReference>
<dbReference type="SUPFAM" id="SSF57667">
    <property type="entry name" value="beta-beta-alpha zinc fingers"/>
    <property type="match status" value="1"/>
</dbReference>
<dbReference type="PROSITE" id="PS50171">
    <property type="entry name" value="ZF_MATRIN"/>
    <property type="match status" value="1"/>
</dbReference>
<sequence length="151" mass="16408">MPKFYCEYCSIYLTHSSPAGRKQHSQGRKHISAKVEYFQRLVREQFFQPPVFLGQTPPIFPGNFRAINHSLGPPMMGVFPGFAPLQTPNIIPQGMMNGIPGGLPGPIPGVPPVPVPMPAIPVIPTELPNMKIDLNQHNAPSVNSTSTTGAQ</sequence>
<proteinExistence type="inferred from homology"/>
<feature type="chain" id="PRO_0000414279" description="U1 small nuclear ribonucleoprotein C">
    <location>
        <begin position="1"/>
        <end position="151"/>
    </location>
</feature>
<feature type="zinc finger region" description="Matrin-type" evidence="1">
    <location>
        <begin position="4"/>
        <end position="36"/>
    </location>
</feature>
<organism>
    <name type="scientific">Theileria annulata</name>
    <dbReference type="NCBI Taxonomy" id="5874"/>
    <lineage>
        <taxon>Eukaryota</taxon>
        <taxon>Sar</taxon>
        <taxon>Alveolata</taxon>
        <taxon>Apicomplexa</taxon>
        <taxon>Aconoidasida</taxon>
        <taxon>Piroplasmida</taxon>
        <taxon>Theileriidae</taxon>
        <taxon>Theileria</taxon>
    </lineage>
</organism>
<comment type="function">
    <text evidence="1">Component of the spliceosomal U1 snRNP, which is essential for recognition of the pre-mRNA 5' splice-site and the subsequent assembly of the spliceosome. U1-C is directly involved in initial 5' splice-site recognition for both constitutive and regulated alternative splicing. The interaction with the 5' splice-site seems to precede base-pairing between the pre-mRNA and the U1 snRNA. Stimulates commitment or early (E) complex formation by stabilizing the base pairing of the 5' end of the U1 snRNA and the 5' splice-site region.</text>
</comment>
<comment type="subunit">
    <text evidence="1">U1 snRNP is composed of the 7 core Sm proteins B/B', D1, D2, D3, E, F and G that assemble in a heptameric protein ring on the Sm site of the small nuclear RNA to form the core snRNP, and at least 3 U1 snRNP-specific proteins U1-70K, U1-A and U1-C. U1-C interacts with U1 snRNA and the 5' splice-site region of the pre-mRNA.</text>
</comment>
<comment type="subcellular location">
    <subcellularLocation>
        <location evidence="1">Nucleus</location>
    </subcellularLocation>
</comment>
<comment type="similarity">
    <text evidence="1">Belongs to the U1 small nuclear ribonucleoprotein C family.</text>
</comment>
<accession>Q4UJ14</accession>
<evidence type="ECO:0000255" key="1">
    <source>
        <dbReference type="HAMAP-Rule" id="MF_03153"/>
    </source>
</evidence>
<keyword id="KW-0479">Metal-binding</keyword>
<keyword id="KW-0539">Nucleus</keyword>
<keyword id="KW-1185">Reference proteome</keyword>
<keyword id="KW-0687">Ribonucleoprotein</keyword>
<keyword id="KW-0694">RNA-binding</keyword>
<keyword id="KW-0862">Zinc</keyword>
<keyword id="KW-0863">Zinc-finger</keyword>
<name>RU1C_THEAN</name>
<gene>
    <name type="ORF">TA09515</name>
</gene>
<protein>
    <recommendedName>
        <fullName evidence="1">U1 small nuclear ribonucleoprotein C</fullName>
        <shortName evidence="1">U1 snRNP C</shortName>
        <shortName evidence="1">U1-C</shortName>
        <shortName evidence="1">U1C</shortName>
    </recommendedName>
</protein>
<reference key="1">
    <citation type="journal article" date="2005" name="Science">
        <title>Genome of the host-cell transforming parasite Theileria annulata compared with T. parva.</title>
        <authorList>
            <person name="Pain A."/>
            <person name="Renauld H."/>
            <person name="Berriman M."/>
            <person name="Murphy L."/>
            <person name="Yeats C.A."/>
            <person name="Weir W."/>
            <person name="Kerhornou A."/>
            <person name="Aslett M."/>
            <person name="Bishop R."/>
            <person name="Bouchier C."/>
            <person name="Cochet M."/>
            <person name="Coulson R.M.R."/>
            <person name="Cronin A."/>
            <person name="de Villiers E.P."/>
            <person name="Fraser A."/>
            <person name="Fosker N."/>
            <person name="Gardner M."/>
            <person name="Goble A."/>
            <person name="Griffiths-Jones S."/>
            <person name="Harris D.E."/>
            <person name="Katzer F."/>
            <person name="Larke N."/>
            <person name="Lord A."/>
            <person name="Maser P."/>
            <person name="McKellar S."/>
            <person name="Mooney P."/>
            <person name="Morton F."/>
            <person name="Nene V."/>
            <person name="O'Neil S."/>
            <person name="Price C."/>
            <person name="Quail M.A."/>
            <person name="Rabbinowitsch E."/>
            <person name="Rawlings N.D."/>
            <person name="Rutter S."/>
            <person name="Saunders D."/>
            <person name="Seeger K."/>
            <person name="Shah T."/>
            <person name="Squares R."/>
            <person name="Squares S."/>
            <person name="Tivey A."/>
            <person name="Walker A.R."/>
            <person name="Woodward J."/>
            <person name="Dobbelaere D.A.E."/>
            <person name="Langsley G."/>
            <person name="Rajandream M.A."/>
            <person name="McKeever D."/>
            <person name="Shiels B."/>
            <person name="Tait A."/>
            <person name="Barrell B.G."/>
            <person name="Hall N."/>
        </authorList>
    </citation>
    <scope>NUCLEOTIDE SEQUENCE [LARGE SCALE GENOMIC DNA]</scope>
    <source>
        <strain>Ankara</strain>
    </source>
</reference>